<sequence>MATIQFIQGINEEVVPDVRLTRSRDGSTGTATFRFTNPKILDASMADKGEITGMYLMDTEGQIITRDVNAKFINGKPQAIEAVHVIKSPDDWDRFMRFMERYAQDNGLTFTKASS</sequence>
<gene>
    <name evidence="1" type="primary">psb28</name>
    <name evidence="1" type="synonym">psbW</name>
</gene>
<reference key="1">
    <citation type="submission" date="2003-11" db="EMBL/GenBank/DDBJ databases">
        <title>Whole genome sequence of Porphyra yezoensis chloroplast.</title>
        <authorList>
            <person name="Kunimoto M."/>
            <person name="Morishima K."/>
            <person name="Yoshikawa M."/>
            <person name="Fukuda S."/>
            <person name="Kobayashi T."/>
            <person name="Kobayashi M."/>
            <person name="Okazaki T."/>
            <person name="Ohara I."/>
            <person name="Nakayama I."/>
        </authorList>
    </citation>
    <scope>NUCLEOTIDE SEQUENCE [LARGE SCALE GENOMIC DNA]</scope>
    <source>
        <strain>U-51</strain>
    </source>
</reference>
<evidence type="ECO:0000255" key="1">
    <source>
        <dbReference type="HAMAP-Rule" id="MF_01370"/>
    </source>
</evidence>
<name>PSB28_PYRYE</name>
<feature type="chain" id="PRO_0000271558" description="Photosystem II reaction center Psb28 protein">
    <location>
        <begin position="1"/>
        <end position="115"/>
    </location>
</feature>
<dbReference type="EMBL" id="AP006715">
    <property type="protein sequence ID" value="BAE92471.1"/>
    <property type="molecule type" value="Genomic_DNA"/>
</dbReference>
<dbReference type="RefSeq" id="YP_537028.1">
    <property type="nucleotide sequence ID" value="NC_007932.1"/>
</dbReference>
<dbReference type="SMR" id="Q1XDE0"/>
<dbReference type="GeneID" id="3978790"/>
<dbReference type="GO" id="GO:0009535">
    <property type="term" value="C:chloroplast thylakoid membrane"/>
    <property type="evidence" value="ECO:0007669"/>
    <property type="project" value="UniProtKB-SubCell"/>
</dbReference>
<dbReference type="GO" id="GO:0009523">
    <property type="term" value="C:photosystem II"/>
    <property type="evidence" value="ECO:0007669"/>
    <property type="project" value="UniProtKB-KW"/>
</dbReference>
<dbReference type="GO" id="GO:0015979">
    <property type="term" value="P:photosynthesis"/>
    <property type="evidence" value="ECO:0007669"/>
    <property type="project" value="UniProtKB-UniRule"/>
</dbReference>
<dbReference type="Gene3D" id="2.40.30.220">
    <property type="entry name" value="Photosystem II Psb28"/>
    <property type="match status" value="1"/>
</dbReference>
<dbReference type="HAMAP" id="MF_01370">
    <property type="entry name" value="PSII_Psb28"/>
    <property type="match status" value="1"/>
</dbReference>
<dbReference type="InterPro" id="IPR038676">
    <property type="entry name" value="Psb28_c1_sf"/>
</dbReference>
<dbReference type="InterPro" id="IPR005610">
    <property type="entry name" value="PSII_Psb28_class-1"/>
</dbReference>
<dbReference type="NCBIfam" id="TIGR03047">
    <property type="entry name" value="PS_II_psb28"/>
    <property type="match status" value="1"/>
</dbReference>
<dbReference type="PANTHER" id="PTHR34963">
    <property type="match status" value="1"/>
</dbReference>
<dbReference type="PANTHER" id="PTHR34963:SF2">
    <property type="entry name" value="PHOTOSYSTEM II REACTION CENTER PSB28 PROTEIN, CHLOROPLASTIC"/>
    <property type="match status" value="1"/>
</dbReference>
<dbReference type="Pfam" id="PF03912">
    <property type="entry name" value="Psb28"/>
    <property type="match status" value="1"/>
</dbReference>
<proteinExistence type="inferred from homology"/>
<geneLocation type="chloroplast"/>
<keyword id="KW-0150">Chloroplast</keyword>
<keyword id="KW-0472">Membrane</keyword>
<keyword id="KW-0602">Photosynthesis</keyword>
<keyword id="KW-0604">Photosystem II</keyword>
<keyword id="KW-0934">Plastid</keyword>
<keyword id="KW-0793">Thylakoid</keyword>
<organism>
    <name type="scientific">Pyropia yezoensis</name>
    <name type="common">Susabi-nori</name>
    <name type="synonym">Porphyra yezoensis</name>
    <dbReference type="NCBI Taxonomy" id="2788"/>
    <lineage>
        <taxon>Eukaryota</taxon>
        <taxon>Rhodophyta</taxon>
        <taxon>Bangiophyceae</taxon>
        <taxon>Bangiales</taxon>
        <taxon>Bangiaceae</taxon>
        <taxon>Pyropia</taxon>
    </lineage>
</organism>
<comment type="subunit">
    <text evidence="1">Part of the photosystem II complex.</text>
</comment>
<comment type="subcellular location">
    <subcellularLocation>
        <location evidence="1">Plastid</location>
        <location evidence="1">Chloroplast thylakoid membrane</location>
        <topology evidence="1">Peripheral membrane protein</topology>
        <orientation evidence="1">Stromal side</orientation>
    </subcellularLocation>
</comment>
<comment type="similarity">
    <text evidence="1">Belongs to the Psb28 family.</text>
</comment>
<accession>Q1XDE0</accession>
<protein>
    <recommendedName>
        <fullName evidence="1">Photosystem II reaction center Psb28 protein</fullName>
    </recommendedName>
    <alternativeName>
        <fullName evidence="1">Photosystem II 13 kDa protein</fullName>
    </alternativeName>
    <alternativeName>
        <fullName evidence="1">Photosystem II reaction center W protein</fullName>
    </alternativeName>
</protein>